<sequence>MLNLEVIIETGEQVIQKISFNLQHISSVLNTEVFDPFDYCYYRGGNFWEIESAEDCSGDDEFIE</sequence>
<organism>
    <name type="scientific">Avian infectious bronchitis virus (strain Beaudette)</name>
    <name type="common">IBV</name>
    <dbReference type="NCBI Taxonomy" id="11122"/>
    <lineage>
        <taxon>Viruses</taxon>
        <taxon>Riboviria</taxon>
        <taxon>Orthornavirae</taxon>
        <taxon>Pisuviricota</taxon>
        <taxon>Pisoniviricetes</taxon>
        <taxon>Nidovirales</taxon>
        <taxon>Cornidovirineae</taxon>
        <taxon>Coronaviridae</taxon>
        <taxon>Orthocoronavirinae</taxon>
        <taxon>Gammacoronavirus</taxon>
        <taxon>Igacovirus</taxon>
        <taxon>Avian coronavirus</taxon>
    </lineage>
</organism>
<accession>P30241</accession>
<proteinExistence type="predicted"/>
<name>NS3B_IBVB</name>
<feature type="chain" id="PRO_0000106113" description="Non-structural protein 3b">
    <location>
        <begin position="1"/>
        <end position="64"/>
    </location>
</feature>
<gene>
    <name type="ORF">3b</name>
</gene>
<keyword id="KW-1185">Reference proteome</keyword>
<protein>
    <recommendedName>
        <fullName>Non-structural protein 3b</fullName>
        <shortName>ns3b</shortName>
    </recommendedName>
    <alternativeName>
        <fullName>Accessory protein 3b</fullName>
    </alternativeName>
</protein>
<reference key="1">
    <citation type="journal article" date="1991" name="Virology">
        <title>A polycistronic mRNA specified by the coronavirus infectious bronchitis virus.</title>
        <authorList>
            <person name="Liu D.X."/>
            <person name="Cavanagh D."/>
            <person name="Green P."/>
            <person name="Inglis S.C."/>
        </authorList>
    </citation>
    <scope>NUCLEOTIDE SEQUENCE</scope>
</reference>
<reference key="2">
    <citation type="journal article" date="1987" name="Adv. Exp. Med. Biol.">
        <title>Identification of a new gene product encoded by mRNA D of infectious bronchitis virus.</title>
        <authorList>
            <person name="Smith A.R."/>
            <person name="Boursnell M.E.G."/>
            <person name="Binns M.M."/>
            <person name="Brown T.D.K."/>
            <person name="Inglis S.C."/>
        </authorList>
    </citation>
    <scope>NUCLEOTIDE SEQUENCE</scope>
</reference>
<dbReference type="EMBL" id="M95169">
    <property type="protein sequence ID" value="AAA70237.1"/>
    <property type="molecule type" value="Genomic_RNA"/>
</dbReference>
<dbReference type="EMBL" id="M27435">
    <property type="protein sequence ID" value="AAA46231.1"/>
    <property type="molecule type" value="mRNA"/>
</dbReference>
<dbReference type="PIR" id="B41038">
    <property type="entry name" value="WMIHB2"/>
</dbReference>
<dbReference type="SMR" id="P30241"/>
<dbReference type="Proteomes" id="UP000006717">
    <property type="component" value="Segment"/>
</dbReference>
<dbReference type="InterPro" id="IPR005295">
    <property type="entry name" value="IBV_3B"/>
</dbReference>
<dbReference type="Pfam" id="PF03622">
    <property type="entry name" value="IBV_3B"/>
    <property type="match status" value="1"/>
</dbReference>
<organismHost>
    <name type="scientific">Gallus gallus</name>
    <name type="common">Chicken</name>
    <dbReference type="NCBI Taxonomy" id="9031"/>
</organismHost>